<proteinExistence type="inferred from homology"/>
<sequence>MDHLLLKTQTQTEQVMNVTNPNSIYIKGRLYFKGYKKIELHCFVDTGASLCIASKFVIPEEHWVNAERPIMVKIADGSSITISKVCKDIDLIIAREIFKIPTVYQQESGIDFIIGNNFCQLYEPFIQFTDRVIFTKNKSYPVHIAKLTRAVRVGTEGFLESMKKRSKTQQPEPVNISTNKIENPLKEIAILSEGRRLSEEKLFITQQRMQKIEELLEKVCSENPLDPNKTKQWMKASIKLSDPSKAIKVKPMKYSPMDREEFDKQIKELLDLKVIKPSKSPHMAPAFLVNNEAEKRRGKKRMVVNYKAMNKATIGDAYNLPNKDELLTLIRGKKIFSSFDCKSGFWQVLLDQESRPLTAFTCPQGHYEWNVVPFGLKQAPSIFQRHMDEAFRVFRKFCCVYVDDILVFSNNEEDHLLHVAMILQKCNQHGIILSKKKAQLFKKKINFLGLEIDEGTHKPQGHILEHINKFPDTLEDKKQLQRFLGILTYASDYIPKLAQIRKPLQAKLKENVPWKWTKEDTLYMQKVKKNLQGFPPLHHPLPEEKLIIETDASDDYWGGMLKAIKINEGTNTELICRYASGSFKAAERNYHSNDKETLAVINTIKKFSIYLTPVHFLIRTDNTHFKSFVNLNYKGDSKLGRNIRWQAWLSHYSFDVEHIKGTDNHFADFLSREFNKVNS</sequence>
<organism>
    <name type="scientific">Cauliflower mosaic virus (strain BBC)</name>
    <name type="common">CaMV</name>
    <dbReference type="NCBI Taxonomy" id="31556"/>
    <lineage>
        <taxon>Viruses</taxon>
        <taxon>Riboviria</taxon>
        <taxon>Pararnavirae</taxon>
        <taxon>Artverviricota</taxon>
        <taxon>Revtraviricetes</taxon>
        <taxon>Ortervirales</taxon>
        <taxon>Caulimoviridae</taxon>
        <taxon>Caulimovirus</taxon>
        <taxon>Caulimovirus tessellobrassicae</taxon>
    </lineage>
</organism>
<comment type="function">
    <text evidence="1">Encodes for at least two polypeptides: protease (PR) and reverse transcriptase (RT). The protease processes the polyprotein in cis. Reverse transcriptase is multifunctional enzyme that converts the viral RNA genome into dsDNA in viral cytoplasmic capsids. This enzyme displays a DNA polymerase activity that can copy either DNA or RNA templates, and a ribonuclease H (RNase H) activity that cleaves the RNA strand of RNA-DNA heteroduplexes in a partially processive 3'- to 5'-endonucleasic mode. Neo-synthesized pregenomic RNA (pgRNA) are encapsidated, and reverse-transcribed inside the nucleocapsid. Partial (+)DNA is synthesized from the (-)DNA template and generates the relaxed circular DNA (RC-DNA) genome. After budding and infection, the RC-DNA migrates in the nucleus, and is converted into a plasmid-like covalently closed circular DNA (cccDNA) (By similarity).</text>
</comment>
<comment type="catalytic activity">
    <reaction evidence="2">
        <text>DNA(n) + a 2'-deoxyribonucleoside 5'-triphosphate = DNA(n+1) + diphosphate</text>
        <dbReference type="Rhea" id="RHEA:22508"/>
        <dbReference type="Rhea" id="RHEA-COMP:17339"/>
        <dbReference type="Rhea" id="RHEA-COMP:17340"/>
        <dbReference type="ChEBI" id="CHEBI:33019"/>
        <dbReference type="ChEBI" id="CHEBI:61560"/>
        <dbReference type="ChEBI" id="CHEBI:173112"/>
        <dbReference type="EC" id="2.7.7.49"/>
    </reaction>
</comment>
<comment type="domain">
    <text evidence="1">The polymerase/reverse transcriptase (RT) and ribonuclease H (RH) domains are structured in five subdomains: finger, palm, thumb, connection and RNase H. Within the palm subdomain, the 'primer grip' region is thought to be involved in the positioning of the primer terminus for accommodating the incoming nucleotide. The RH domain stabilizes the association of RT with primer-template (By similarity).</text>
</comment>
<comment type="similarity">
    <text evidence="3">Belongs to the caulimoviridae enzymatic polyprotein family.</text>
</comment>
<name>POL_CAMVE</name>
<dbReference type="EC" id="3.4.23.-"/>
<dbReference type="EC" id="2.7.7.49"/>
<dbReference type="EMBL" id="M90542">
    <property type="protein sequence ID" value="AAA62375.1"/>
    <property type="molecule type" value="Genomic_DNA"/>
</dbReference>
<dbReference type="SMR" id="Q02964"/>
<dbReference type="MEROPS" id="A03.001"/>
<dbReference type="Proteomes" id="UP000008440">
    <property type="component" value="Genome"/>
</dbReference>
<dbReference type="GO" id="GO:0004190">
    <property type="term" value="F:aspartic-type endopeptidase activity"/>
    <property type="evidence" value="ECO:0007669"/>
    <property type="project" value="UniProtKB-KW"/>
</dbReference>
<dbReference type="GO" id="GO:0004519">
    <property type="term" value="F:endonuclease activity"/>
    <property type="evidence" value="ECO:0007669"/>
    <property type="project" value="UniProtKB-KW"/>
</dbReference>
<dbReference type="GO" id="GO:0003964">
    <property type="term" value="F:RNA-directed DNA polymerase activity"/>
    <property type="evidence" value="ECO:0007669"/>
    <property type="project" value="UniProtKB-KW"/>
</dbReference>
<dbReference type="GO" id="GO:0006508">
    <property type="term" value="P:proteolysis"/>
    <property type="evidence" value="ECO:0007669"/>
    <property type="project" value="UniProtKB-KW"/>
</dbReference>
<dbReference type="CDD" id="cd00303">
    <property type="entry name" value="retropepsin_like"/>
    <property type="match status" value="1"/>
</dbReference>
<dbReference type="CDD" id="cd09274">
    <property type="entry name" value="RNase_HI_RT_Ty3"/>
    <property type="match status" value="1"/>
</dbReference>
<dbReference type="CDD" id="cd01647">
    <property type="entry name" value="RT_LTR"/>
    <property type="match status" value="1"/>
</dbReference>
<dbReference type="Gene3D" id="3.30.70.270">
    <property type="match status" value="2"/>
</dbReference>
<dbReference type="Gene3D" id="2.40.70.10">
    <property type="entry name" value="Acid Proteases"/>
    <property type="match status" value="1"/>
</dbReference>
<dbReference type="Gene3D" id="3.10.10.10">
    <property type="entry name" value="HIV Type 1 Reverse Transcriptase, subunit A, domain 1"/>
    <property type="match status" value="1"/>
</dbReference>
<dbReference type="InterPro" id="IPR043502">
    <property type="entry name" value="DNA/RNA_pol_sf"/>
</dbReference>
<dbReference type="InterPro" id="IPR000588">
    <property type="entry name" value="Pept_A3A"/>
</dbReference>
<dbReference type="InterPro" id="IPR021109">
    <property type="entry name" value="Peptidase_aspartic_dom_sf"/>
</dbReference>
<dbReference type="InterPro" id="IPR043128">
    <property type="entry name" value="Rev_trsase/Diguanyl_cyclase"/>
</dbReference>
<dbReference type="InterPro" id="IPR000477">
    <property type="entry name" value="RT_dom"/>
</dbReference>
<dbReference type="InterPro" id="IPR041373">
    <property type="entry name" value="RT_RNaseH"/>
</dbReference>
<dbReference type="InterPro" id="IPR051320">
    <property type="entry name" value="Viral_Replic_Matur_Polypro"/>
</dbReference>
<dbReference type="PANTHER" id="PTHR33064">
    <property type="entry name" value="POL PROTEIN"/>
    <property type="match status" value="1"/>
</dbReference>
<dbReference type="PANTHER" id="PTHR33064:SF37">
    <property type="entry name" value="RIBONUCLEASE H"/>
    <property type="match status" value="1"/>
</dbReference>
<dbReference type="Pfam" id="PF02160">
    <property type="entry name" value="Peptidase_A3"/>
    <property type="match status" value="1"/>
</dbReference>
<dbReference type="Pfam" id="PF17917">
    <property type="entry name" value="RT_RNaseH"/>
    <property type="match status" value="1"/>
</dbReference>
<dbReference type="Pfam" id="PF00078">
    <property type="entry name" value="RVT_1"/>
    <property type="match status" value="1"/>
</dbReference>
<dbReference type="PRINTS" id="PR00731">
    <property type="entry name" value="CAULIMOPTASE"/>
</dbReference>
<dbReference type="SUPFAM" id="SSF56672">
    <property type="entry name" value="DNA/RNA polymerases"/>
    <property type="match status" value="1"/>
</dbReference>
<dbReference type="PROSITE" id="PS50878">
    <property type="entry name" value="RT_POL"/>
    <property type="match status" value="1"/>
</dbReference>
<evidence type="ECO:0000250" key="1"/>
<evidence type="ECO:0000255" key="2">
    <source>
        <dbReference type="PROSITE-ProRule" id="PRU00405"/>
    </source>
</evidence>
<evidence type="ECO:0000305" key="3"/>
<feature type="chain" id="PRO_0000222052" description="Enzymatic polyprotein">
    <location>
        <begin position="1"/>
        <end position="679"/>
    </location>
</feature>
<feature type="domain" description="Reverse transcriptase" evidence="2">
    <location>
        <begin position="272"/>
        <end position="452"/>
    </location>
</feature>
<feature type="region of interest" description="Protease" evidence="1">
    <location>
        <begin position="40"/>
        <end position="130"/>
    </location>
</feature>
<feature type="active site" evidence="1">
    <location>
        <position position="45"/>
    </location>
</feature>
<reference key="1">
    <citation type="journal article" date="1993" name="Gene">
        <title>The complete nucleotide sequence of cauliflower mosaic virus isolate BBC.</title>
        <authorList>
            <person name="Chenault K.D."/>
            <person name="Melcher U.K."/>
        </authorList>
    </citation>
    <scope>NUCLEOTIDE SEQUENCE [GENOMIC DNA]</scope>
</reference>
<organismHost>
    <name type="scientific">Arabidopsis thaliana</name>
    <name type="common">Mouse-ear cress</name>
    <dbReference type="NCBI Taxonomy" id="3702"/>
</organismHost>
<organismHost>
    <name type="scientific">Brassica</name>
    <dbReference type="NCBI Taxonomy" id="3705"/>
</organismHost>
<organismHost>
    <name type="scientific">Raphanus</name>
    <dbReference type="NCBI Taxonomy" id="3725"/>
</organismHost>
<gene>
    <name type="ORF">ORF V</name>
</gene>
<keyword id="KW-0064">Aspartyl protease</keyword>
<keyword id="KW-0255">Endonuclease</keyword>
<keyword id="KW-0378">Hydrolase</keyword>
<keyword id="KW-0540">Nuclease</keyword>
<keyword id="KW-0548">Nucleotidyltransferase</keyword>
<keyword id="KW-0645">Protease</keyword>
<keyword id="KW-0695">RNA-directed DNA polymerase</keyword>
<keyword id="KW-0808">Transferase</keyword>
<accession>Q02964</accession>
<protein>
    <recommendedName>
        <fullName>Enzymatic polyprotein</fullName>
    </recommendedName>
    <domain>
        <recommendedName>
            <fullName>Aspartic protease</fullName>
            <ecNumber>3.4.23.-</ecNumber>
        </recommendedName>
    </domain>
    <domain>
        <recommendedName>
            <fullName>Endonuclease</fullName>
        </recommendedName>
    </domain>
    <domain>
        <recommendedName>
            <fullName>Reverse transcriptase</fullName>
            <ecNumber>2.7.7.49</ecNumber>
        </recommendedName>
    </domain>
</protein>